<reference key="1">
    <citation type="submission" date="1995-04" db="EMBL/GenBank/DDBJ databases">
        <authorList>
            <person name="Jamieson L."/>
            <person name="Orr E."/>
        </authorList>
    </citation>
    <scope>NUCLEOTIDE SEQUENCE [GENOMIC DNA]</scope>
    <source>
        <strain>YNN 259</strain>
    </source>
</reference>
<reference key="2">
    <citation type="journal article" date="1997" name="Nature">
        <title>The nucleotide sequence of Saccharomyces cerevisiae chromosome XVI.</title>
        <authorList>
            <person name="Bussey H."/>
            <person name="Storms R.K."/>
            <person name="Ahmed A."/>
            <person name="Albermann K."/>
            <person name="Allen E."/>
            <person name="Ansorge W."/>
            <person name="Araujo R."/>
            <person name="Aparicio A."/>
            <person name="Barrell B.G."/>
            <person name="Badcock K."/>
            <person name="Benes V."/>
            <person name="Botstein D."/>
            <person name="Bowman S."/>
            <person name="Brueckner M."/>
            <person name="Carpenter J."/>
            <person name="Cherry J.M."/>
            <person name="Chung E."/>
            <person name="Churcher C.M."/>
            <person name="Coster F."/>
            <person name="Davis K."/>
            <person name="Davis R.W."/>
            <person name="Dietrich F.S."/>
            <person name="Delius H."/>
            <person name="DiPaolo T."/>
            <person name="Dubois E."/>
            <person name="Duesterhoeft A."/>
            <person name="Duncan M."/>
            <person name="Floeth M."/>
            <person name="Fortin N."/>
            <person name="Friesen J.D."/>
            <person name="Fritz C."/>
            <person name="Goffeau A."/>
            <person name="Hall J."/>
            <person name="Hebling U."/>
            <person name="Heumann K."/>
            <person name="Hilbert H."/>
            <person name="Hillier L.W."/>
            <person name="Hunicke-Smith S."/>
            <person name="Hyman R.W."/>
            <person name="Johnston M."/>
            <person name="Kalman S."/>
            <person name="Kleine K."/>
            <person name="Komp C."/>
            <person name="Kurdi O."/>
            <person name="Lashkari D."/>
            <person name="Lew H."/>
            <person name="Lin A."/>
            <person name="Lin D."/>
            <person name="Louis E.J."/>
            <person name="Marathe R."/>
            <person name="Messenguy F."/>
            <person name="Mewes H.-W."/>
            <person name="Mirtipati S."/>
            <person name="Moestl D."/>
            <person name="Mueller-Auer S."/>
            <person name="Namath A."/>
            <person name="Nentwich U."/>
            <person name="Oefner P."/>
            <person name="Pearson D."/>
            <person name="Petel F.X."/>
            <person name="Pohl T.M."/>
            <person name="Purnelle B."/>
            <person name="Rajandream M.A."/>
            <person name="Rechmann S."/>
            <person name="Rieger M."/>
            <person name="Riles L."/>
            <person name="Roberts D."/>
            <person name="Schaefer M."/>
            <person name="Scharfe M."/>
            <person name="Scherens B."/>
            <person name="Schramm S."/>
            <person name="Schroeder M."/>
            <person name="Sdicu A.-M."/>
            <person name="Tettelin H."/>
            <person name="Urrestarazu L.A."/>
            <person name="Ushinsky S."/>
            <person name="Vierendeels F."/>
            <person name="Vissers S."/>
            <person name="Voss H."/>
            <person name="Walsh S.V."/>
            <person name="Wambutt R."/>
            <person name="Wang Y."/>
            <person name="Wedler E."/>
            <person name="Wedler H."/>
            <person name="Winnett E."/>
            <person name="Zhong W.-W."/>
            <person name="Zollner A."/>
            <person name="Vo D.H."/>
            <person name="Hani J."/>
        </authorList>
    </citation>
    <scope>NUCLEOTIDE SEQUENCE [LARGE SCALE GENOMIC DNA]</scope>
    <source>
        <strain>ATCC 204508 / S288c</strain>
    </source>
</reference>
<reference key="3">
    <citation type="journal article" date="2014" name="G3 (Bethesda)">
        <title>The reference genome sequence of Saccharomyces cerevisiae: Then and now.</title>
        <authorList>
            <person name="Engel S.R."/>
            <person name="Dietrich F.S."/>
            <person name="Fisk D.G."/>
            <person name="Binkley G."/>
            <person name="Balakrishnan R."/>
            <person name="Costanzo M.C."/>
            <person name="Dwight S.S."/>
            <person name="Hitz B.C."/>
            <person name="Karra K."/>
            <person name="Nash R.S."/>
            <person name="Weng S."/>
            <person name="Wong E.D."/>
            <person name="Lloyd P."/>
            <person name="Skrzypek M.S."/>
            <person name="Miyasato S.R."/>
            <person name="Simison M."/>
            <person name="Cherry J.M."/>
        </authorList>
    </citation>
    <scope>GENOME REANNOTATION</scope>
    <source>
        <strain>ATCC 204508 / S288c</strain>
    </source>
</reference>
<reference key="4">
    <citation type="journal article" date="2007" name="Genome Res.">
        <title>Approaching a complete repository of sequence-verified protein-encoding clones for Saccharomyces cerevisiae.</title>
        <authorList>
            <person name="Hu Y."/>
            <person name="Rolfs A."/>
            <person name="Bhullar B."/>
            <person name="Murthy T.V.S."/>
            <person name="Zhu C."/>
            <person name="Berger M.F."/>
            <person name="Camargo A.A."/>
            <person name="Kelley F."/>
            <person name="McCarron S."/>
            <person name="Jepson D."/>
            <person name="Richardson A."/>
            <person name="Raphael J."/>
            <person name="Moreira D."/>
            <person name="Taycher E."/>
            <person name="Zuo D."/>
            <person name="Mohr S."/>
            <person name="Kane M.F."/>
            <person name="Williamson J."/>
            <person name="Simpson A.J.G."/>
            <person name="Bulyk M.L."/>
            <person name="Harlow E."/>
            <person name="Marsischky G."/>
            <person name="Kolodner R.D."/>
            <person name="LaBaer J."/>
        </authorList>
    </citation>
    <scope>NUCLEOTIDE SEQUENCE [GENOMIC DNA]</scope>
    <source>
        <strain>ATCC 204508 / S288c</strain>
    </source>
</reference>
<reference key="5">
    <citation type="journal article" date="2009" name="Science">
        <title>Global analysis of Cdk1 substrate phosphorylation sites provides insights into evolution.</title>
        <authorList>
            <person name="Holt L.J."/>
            <person name="Tuch B.B."/>
            <person name="Villen J."/>
            <person name="Johnson A.D."/>
            <person name="Gygi S.P."/>
            <person name="Morgan D.O."/>
        </authorList>
    </citation>
    <scope>PHOSPHORYLATION [LARGE SCALE ANALYSIS] AT SER-21; SER-30 AND SER-282</scope>
    <scope>IDENTIFICATION BY MASS SPECTROMETRY [LARGE SCALE ANALYSIS]</scope>
</reference>
<reference key="6">
    <citation type="journal article" date="2012" name="Proc. Natl. Acad. Sci. U.S.A.">
        <title>N-terminal acetylome analyses and functional insights of the N-terminal acetyltransferase NatB.</title>
        <authorList>
            <person name="Van Damme P."/>
            <person name="Lasa M."/>
            <person name="Polevoda B."/>
            <person name="Gazquez C."/>
            <person name="Elosegui-Artola A."/>
            <person name="Kim D.S."/>
            <person name="De Juan-Pardo E."/>
            <person name="Demeyer K."/>
            <person name="Hole K."/>
            <person name="Larrea E."/>
            <person name="Timmerman E."/>
            <person name="Prieto J."/>
            <person name="Arnesen T."/>
            <person name="Sherman F."/>
            <person name="Gevaert K."/>
            <person name="Aldabe R."/>
        </authorList>
    </citation>
    <scope>IDENTIFICATION BY MASS SPECTROMETRY [LARGE SCALE ANALYSIS]</scope>
</reference>
<protein>
    <recommendedName>
        <fullName>Zinc finger protein LEE1</fullName>
    </recommendedName>
</protein>
<name>LEE1_YEAST</name>
<dbReference type="EMBL" id="X86735">
    <property type="protein sequence ID" value="CAA60414.1"/>
    <property type="molecule type" value="Genomic_DNA"/>
</dbReference>
<dbReference type="EMBL" id="U39205">
    <property type="protein sequence ID" value="AAB68311.1"/>
    <property type="molecule type" value="Genomic_DNA"/>
</dbReference>
<dbReference type="EMBL" id="AY693073">
    <property type="protein sequence ID" value="AAT93092.1"/>
    <property type="molecule type" value="Genomic_DNA"/>
</dbReference>
<dbReference type="EMBL" id="BK006949">
    <property type="protein sequence ID" value="DAA11376.1"/>
    <property type="molecule type" value="Genomic_DNA"/>
</dbReference>
<dbReference type="PIR" id="S60936">
    <property type="entry name" value="S60936"/>
</dbReference>
<dbReference type="RefSeq" id="NP_015271.1">
    <property type="nucleotide sequence ID" value="NM_001183868.1"/>
</dbReference>
<dbReference type="BioGRID" id="36126">
    <property type="interactions" value="74"/>
</dbReference>
<dbReference type="FunCoup" id="Q02799">
    <property type="interactions" value="63"/>
</dbReference>
<dbReference type="STRING" id="4932.YPL054W"/>
<dbReference type="GlyGen" id="Q02799">
    <property type="glycosylation" value="2 sites, 1 O-linked glycan (1 site)"/>
</dbReference>
<dbReference type="iPTMnet" id="Q02799"/>
<dbReference type="PaxDb" id="4932-YPL054W"/>
<dbReference type="PeptideAtlas" id="Q02799"/>
<dbReference type="EnsemblFungi" id="YPL054W_mRNA">
    <property type="protein sequence ID" value="YPL054W"/>
    <property type="gene ID" value="YPL054W"/>
</dbReference>
<dbReference type="GeneID" id="856053"/>
<dbReference type="KEGG" id="sce:YPL054W"/>
<dbReference type="AGR" id="SGD:S000005975"/>
<dbReference type="SGD" id="S000005975">
    <property type="gene designation" value="LEE1"/>
</dbReference>
<dbReference type="VEuPathDB" id="FungiDB:YPL054W"/>
<dbReference type="eggNOG" id="KOG1039">
    <property type="taxonomic scope" value="Eukaryota"/>
</dbReference>
<dbReference type="GeneTree" id="ENSGT00950000183077"/>
<dbReference type="HOGENOM" id="CLU_080788_0_0_1"/>
<dbReference type="InParanoid" id="Q02799"/>
<dbReference type="OMA" id="NSRYCHE"/>
<dbReference type="OrthoDB" id="411372at2759"/>
<dbReference type="BioCyc" id="YEAST:G3O-33966-MONOMER"/>
<dbReference type="BioGRID-ORCS" id="856053">
    <property type="hits" value="4 hits in 10 CRISPR screens"/>
</dbReference>
<dbReference type="PRO" id="PR:Q02799"/>
<dbReference type="Proteomes" id="UP000002311">
    <property type="component" value="Chromosome XVI"/>
</dbReference>
<dbReference type="RNAct" id="Q02799">
    <property type="molecule type" value="protein"/>
</dbReference>
<dbReference type="GO" id="GO:0061630">
    <property type="term" value="F:ubiquitin protein ligase activity"/>
    <property type="evidence" value="ECO:0000318"/>
    <property type="project" value="GO_Central"/>
</dbReference>
<dbReference type="GO" id="GO:0008270">
    <property type="term" value="F:zinc ion binding"/>
    <property type="evidence" value="ECO:0007669"/>
    <property type="project" value="UniProtKB-KW"/>
</dbReference>
<dbReference type="GO" id="GO:0000209">
    <property type="term" value="P:protein polyubiquitination"/>
    <property type="evidence" value="ECO:0007669"/>
    <property type="project" value="InterPro"/>
</dbReference>
<dbReference type="GO" id="GO:0016567">
    <property type="term" value="P:protein ubiquitination"/>
    <property type="evidence" value="ECO:0000318"/>
    <property type="project" value="GO_Central"/>
</dbReference>
<dbReference type="Gene3D" id="4.10.1000.10">
    <property type="entry name" value="Zinc finger, CCCH-type"/>
    <property type="match status" value="1"/>
</dbReference>
<dbReference type="InterPro" id="IPR045072">
    <property type="entry name" value="MKRN-like"/>
</dbReference>
<dbReference type="InterPro" id="IPR041367">
    <property type="entry name" value="Znf-CCCH_4"/>
</dbReference>
<dbReference type="InterPro" id="IPR000571">
    <property type="entry name" value="Znf_CCCH"/>
</dbReference>
<dbReference type="InterPro" id="IPR036855">
    <property type="entry name" value="Znf_CCCH_sf"/>
</dbReference>
<dbReference type="PANTHER" id="PTHR11224:SF10">
    <property type="entry name" value="IP09428P-RELATED"/>
    <property type="match status" value="1"/>
</dbReference>
<dbReference type="PANTHER" id="PTHR11224">
    <property type="entry name" value="MAKORIN-RELATED"/>
    <property type="match status" value="1"/>
</dbReference>
<dbReference type="Pfam" id="PF00642">
    <property type="entry name" value="zf-CCCH"/>
    <property type="match status" value="1"/>
</dbReference>
<dbReference type="Pfam" id="PF18044">
    <property type="entry name" value="zf-CCCH_4"/>
    <property type="match status" value="1"/>
</dbReference>
<dbReference type="SMART" id="SM00356">
    <property type="entry name" value="ZnF_C3H1"/>
    <property type="match status" value="2"/>
</dbReference>
<dbReference type="SUPFAM" id="SSF90229">
    <property type="entry name" value="CCCH zinc finger"/>
    <property type="match status" value="1"/>
</dbReference>
<dbReference type="PROSITE" id="PS50103">
    <property type="entry name" value="ZF_C3H1"/>
    <property type="match status" value="2"/>
</dbReference>
<evidence type="ECO:0000255" key="1">
    <source>
        <dbReference type="PROSITE-ProRule" id="PRU00723"/>
    </source>
</evidence>
<evidence type="ECO:0000256" key="2">
    <source>
        <dbReference type="SAM" id="MobiDB-lite"/>
    </source>
</evidence>
<evidence type="ECO:0000305" key="3"/>
<evidence type="ECO:0007744" key="4">
    <source>
    </source>
</evidence>
<feature type="chain" id="PRO_0000213909" description="Zinc finger protein LEE1">
    <location>
        <begin position="1"/>
        <end position="301"/>
    </location>
</feature>
<feature type="zinc finger region" description="C3H1-type 1" evidence="1">
    <location>
        <begin position="87"/>
        <end position="114"/>
    </location>
</feature>
<feature type="zinc finger region" description="C3H1-type 2" evidence="1">
    <location>
        <begin position="123"/>
        <end position="145"/>
    </location>
</feature>
<feature type="region of interest" description="Disordered" evidence="2">
    <location>
        <begin position="1"/>
        <end position="25"/>
    </location>
</feature>
<feature type="compositionally biased region" description="Polar residues" evidence="2">
    <location>
        <begin position="7"/>
        <end position="25"/>
    </location>
</feature>
<feature type="modified residue" description="Phosphoserine" evidence="4">
    <location>
        <position position="21"/>
    </location>
</feature>
<feature type="modified residue" description="Phosphoserine" evidence="4">
    <location>
        <position position="30"/>
    </location>
</feature>
<feature type="modified residue" description="Phosphoserine" evidence="4">
    <location>
        <position position="282"/>
    </location>
</feature>
<feature type="sequence conflict" description="In Ref. 1; CAA60414." evidence="3" ref="1">
    <original>Y</original>
    <variation>F</variation>
    <location>
        <position position="198"/>
    </location>
</feature>
<proteinExistence type="evidence at protein level"/>
<sequence>MDAFENMSVSNHPGGNARRNSQSANEMLASQIQDFQNIPRSFNDSNANVNLSKNCTVGNQLPFSSRQQKIIMEHLLITKNNSQQQKDYSHVPCKFFKMGNCQAGSSCPFSHSPDIISSANNLPCKYFAKGNCKFGNKCVNAHVLPNGFKMNSKEPIDITPPSQNNYLSHARSASFSTYTSPPLSAQTEFSHSASNANYFSSQYLMYSPQKSPEALYTEFFSPPSSSSSYINYSYNNSNINAYSPVSSSSSNIWQEQGQTTLSNPSVNQNLRYRTGPAIQEESDNEIEDLLIHNFNSRYCHE</sequence>
<keyword id="KW-0479">Metal-binding</keyword>
<keyword id="KW-0597">Phosphoprotein</keyword>
<keyword id="KW-1185">Reference proteome</keyword>
<keyword id="KW-0677">Repeat</keyword>
<keyword id="KW-0862">Zinc</keyword>
<keyword id="KW-0863">Zinc-finger</keyword>
<gene>
    <name type="primary">LEE1</name>
    <name type="ordered locus">YPL054W</name>
</gene>
<accession>Q02799</accession>
<accession>D6W3W0</accession>
<accession>Q06701</accession>
<organism>
    <name type="scientific">Saccharomyces cerevisiae (strain ATCC 204508 / S288c)</name>
    <name type="common">Baker's yeast</name>
    <dbReference type="NCBI Taxonomy" id="559292"/>
    <lineage>
        <taxon>Eukaryota</taxon>
        <taxon>Fungi</taxon>
        <taxon>Dikarya</taxon>
        <taxon>Ascomycota</taxon>
        <taxon>Saccharomycotina</taxon>
        <taxon>Saccharomycetes</taxon>
        <taxon>Saccharomycetales</taxon>
        <taxon>Saccharomycetaceae</taxon>
        <taxon>Saccharomyces</taxon>
    </lineage>
</organism>